<accession>B7MDP4</accession>
<feature type="chain" id="PRO_1000139843" description="HTH-type transcriptional regulator MalT">
    <location>
        <begin position="1"/>
        <end position="901"/>
    </location>
</feature>
<feature type="domain" description="HTH luxR-type" evidence="1">
    <location>
        <begin position="829"/>
        <end position="894"/>
    </location>
</feature>
<feature type="DNA-binding region" description="H-T-H motif" evidence="1">
    <location>
        <begin position="853"/>
        <end position="872"/>
    </location>
</feature>
<feature type="binding site" evidence="1">
    <location>
        <begin position="39"/>
        <end position="46"/>
    </location>
    <ligand>
        <name>ATP</name>
        <dbReference type="ChEBI" id="CHEBI:30616"/>
    </ligand>
</feature>
<organism>
    <name type="scientific">Escherichia coli O45:K1 (strain S88 / ExPEC)</name>
    <dbReference type="NCBI Taxonomy" id="585035"/>
    <lineage>
        <taxon>Bacteria</taxon>
        <taxon>Pseudomonadati</taxon>
        <taxon>Pseudomonadota</taxon>
        <taxon>Gammaproteobacteria</taxon>
        <taxon>Enterobacterales</taxon>
        <taxon>Enterobacteriaceae</taxon>
        <taxon>Escherichia</taxon>
    </lineage>
</organism>
<comment type="function">
    <text evidence="1">Positively regulates the transcription of the maltose regulon whose gene products are responsible for uptake and catabolism of malto-oligosaccharides. Specifically binds to the promoter region of its target genes, recognizing a short DNA motif called the MalT box.</text>
</comment>
<comment type="activity regulation">
    <text evidence="1">Activated by ATP and maltotriose, which are both required for DNA binding.</text>
</comment>
<comment type="subunit">
    <text evidence="1">Monomer in solution. Oligomerizes to an active state in the presence of the positive effectors ATP and maltotriose.</text>
</comment>
<comment type="similarity">
    <text evidence="1">Belongs to the MalT family.</text>
</comment>
<protein>
    <recommendedName>
        <fullName evidence="1">HTH-type transcriptional regulator MalT</fullName>
    </recommendedName>
    <alternativeName>
        <fullName evidence="1">ATP-dependent transcriptional activator MalT</fullName>
    </alternativeName>
</protein>
<dbReference type="EMBL" id="CU928161">
    <property type="protein sequence ID" value="CAR05019.1"/>
    <property type="molecule type" value="Genomic_DNA"/>
</dbReference>
<dbReference type="RefSeq" id="WP_000906972.1">
    <property type="nucleotide sequence ID" value="NC_011742.1"/>
</dbReference>
<dbReference type="SMR" id="B7MDP4"/>
<dbReference type="KEGG" id="ecz:ECS88_3807"/>
<dbReference type="HOGENOM" id="CLU_006325_3_0_6"/>
<dbReference type="Proteomes" id="UP000000747">
    <property type="component" value="Chromosome"/>
</dbReference>
<dbReference type="GO" id="GO:0005524">
    <property type="term" value="F:ATP binding"/>
    <property type="evidence" value="ECO:0007669"/>
    <property type="project" value="UniProtKB-UniRule"/>
</dbReference>
<dbReference type="GO" id="GO:0003677">
    <property type="term" value="F:DNA binding"/>
    <property type="evidence" value="ECO:0007669"/>
    <property type="project" value="UniProtKB-KW"/>
</dbReference>
<dbReference type="GO" id="GO:0003700">
    <property type="term" value="F:DNA-binding transcription factor activity"/>
    <property type="evidence" value="ECO:0007669"/>
    <property type="project" value="UniProtKB-UniRule"/>
</dbReference>
<dbReference type="GO" id="GO:0045913">
    <property type="term" value="P:positive regulation of carbohydrate metabolic process"/>
    <property type="evidence" value="ECO:0007669"/>
    <property type="project" value="UniProtKB-UniRule"/>
</dbReference>
<dbReference type="GO" id="GO:0045893">
    <property type="term" value="P:positive regulation of DNA-templated transcription"/>
    <property type="evidence" value="ECO:0007669"/>
    <property type="project" value="UniProtKB-UniRule"/>
</dbReference>
<dbReference type="CDD" id="cd06170">
    <property type="entry name" value="LuxR_C_like"/>
    <property type="match status" value="1"/>
</dbReference>
<dbReference type="FunFam" id="1.10.10.10:FF:000115">
    <property type="entry name" value="HTH-type transcriptional regulator MalT"/>
    <property type="match status" value="1"/>
</dbReference>
<dbReference type="FunFam" id="1.25.40.10:FF:000086">
    <property type="entry name" value="HTH-type transcriptional regulator MalT"/>
    <property type="match status" value="1"/>
</dbReference>
<dbReference type="Gene3D" id="3.40.50.300">
    <property type="entry name" value="P-loop containing nucleotide triphosphate hydrolases"/>
    <property type="match status" value="1"/>
</dbReference>
<dbReference type="Gene3D" id="1.25.40.10">
    <property type="entry name" value="Tetratricopeptide repeat domain"/>
    <property type="match status" value="1"/>
</dbReference>
<dbReference type="Gene3D" id="1.10.10.10">
    <property type="entry name" value="Winged helix-like DNA-binding domain superfamily/Winged helix DNA-binding domain"/>
    <property type="match status" value="1"/>
</dbReference>
<dbReference type="HAMAP" id="MF_01247">
    <property type="entry name" value="HTH_type_MalT"/>
    <property type="match status" value="1"/>
</dbReference>
<dbReference type="InterPro" id="IPR027417">
    <property type="entry name" value="P-loop_NTPase"/>
</dbReference>
<dbReference type="InterPro" id="IPR016032">
    <property type="entry name" value="Sig_transdc_resp-reg_C-effctor"/>
</dbReference>
<dbReference type="InterPro" id="IPR011990">
    <property type="entry name" value="TPR-like_helical_dom_sf"/>
</dbReference>
<dbReference type="InterPro" id="IPR041617">
    <property type="entry name" value="TPR_MalT"/>
</dbReference>
<dbReference type="InterPro" id="IPR023768">
    <property type="entry name" value="Tscrpt_reg_HTH_MalT"/>
</dbReference>
<dbReference type="InterPro" id="IPR000792">
    <property type="entry name" value="Tscrpt_reg_LuxR_C"/>
</dbReference>
<dbReference type="InterPro" id="IPR036388">
    <property type="entry name" value="WH-like_DNA-bd_sf"/>
</dbReference>
<dbReference type="NCBIfam" id="NF003420">
    <property type="entry name" value="PRK04841.1"/>
    <property type="match status" value="1"/>
</dbReference>
<dbReference type="PANTHER" id="PTHR44688">
    <property type="entry name" value="DNA-BINDING TRANSCRIPTIONAL ACTIVATOR DEVR_DOSR"/>
    <property type="match status" value="1"/>
</dbReference>
<dbReference type="PANTHER" id="PTHR44688:SF16">
    <property type="entry name" value="DNA-BINDING TRANSCRIPTIONAL ACTIVATOR DEVR_DOSR"/>
    <property type="match status" value="1"/>
</dbReference>
<dbReference type="Pfam" id="PF00196">
    <property type="entry name" value="GerE"/>
    <property type="match status" value="1"/>
</dbReference>
<dbReference type="Pfam" id="PF17874">
    <property type="entry name" value="TPR_MalT"/>
    <property type="match status" value="1"/>
</dbReference>
<dbReference type="PRINTS" id="PR00038">
    <property type="entry name" value="HTHLUXR"/>
</dbReference>
<dbReference type="SMART" id="SM00421">
    <property type="entry name" value="HTH_LUXR"/>
    <property type="match status" value="1"/>
</dbReference>
<dbReference type="SUPFAM" id="SSF46894">
    <property type="entry name" value="C-terminal effector domain of the bipartite response regulators"/>
    <property type="match status" value="1"/>
</dbReference>
<dbReference type="SUPFAM" id="SSF52540">
    <property type="entry name" value="P-loop containing nucleoside triphosphate hydrolases"/>
    <property type="match status" value="1"/>
</dbReference>
<dbReference type="SUPFAM" id="SSF48452">
    <property type="entry name" value="TPR-like"/>
    <property type="match status" value="1"/>
</dbReference>
<dbReference type="PROSITE" id="PS00622">
    <property type="entry name" value="HTH_LUXR_1"/>
    <property type="match status" value="1"/>
</dbReference>
<dbReference type="PROSITE" id="PS50043">
    <property type="entry name" value="HTH_LUXR_2"/>
    <property type="match status" value="1"/>
</dbReference>
<gene>
    <name evidence="1" type="primary">malT</name>
    <name type="ordered locus">ECS88_3807</name>
</gene>
<evidence type="ECO:0000255" key="1">
    <source>
        <dbReference type="HAMAP-Rule" id="MF_01247"/>
    </source>
</evidence>
<sequence>MLIPSKLSRPVRLDHTVVRERLLAKLSGANNFRLALITSPAGYGKTTLISQWAAGKNDIGWYSLDEGDNQQERFASYLIAAVQQATNGHCAICETMAQKRQYASLTSLFAQLFIELAEWHSPLYLVIDDYHLITNPVIHESMRFFIRHQPENLTLVVLSRNLPQLGIANLRVRDQLLEIGSQQLAFTHQEAKQFFDCRLSSPIEAAESSRICDDVSGWATALQLIALSARQNTHSAHKSARRLAGINASHLSDYLVDEVLDNVDLATRHFLLKSAILRSMNDALITRVTGEENGQMRLEEIERQGLFLQRMDDTGEWFCYHPLFGNFLRQRCQWELAAELPEIHRAAAESWMAQGFPSEAIHHALAAGDALMLRDILLNHAWSLFNHSELSLLEESLKALPWDSLLENPQLVLLQAWLMQSQHRYGEVNTLLARAEHEIKDIREGTMHAEFNALRAQVAINDGNPDEAERLAKLALEELPPGWFYSRIVATSVLGEVLHCKGELTRSLALMQQTEQMARQHDVWHYALWSLIQQSEILFAQGFLQTAWETQEKAFQLINEQHLEQLPMHEFLVRIRAQLLWAWARLDEAEASARSGIEVLSSYQPQQQLQCLAMLIQCSLARGDLDNARSQLNRLENLLGNGKYHSDWISNANKVRVIYWQMTGDKAAAANWLRHTAKPEFANNHFLQGQWRNIARAQILLGEFESAEIVLEELNENARSLRLMSDLNRNLLLLNQLYWQAGRKSDAQRVLLDALKLANRTGFISHFVIEGEAMAQQLRQLIQLNTLPELEQHRAQRILREINQHHRHKFAHFDENFVERLLNHPEVPELIRTSPLTQREWQVLGLIYSGYSNEQIAGELEVAATTIKTHIRNLYQKLGVAHRQAAVQHAQKLLKMMGYGV</sequence>
<proteinExistence type="inferred from homology"/>
<name>MALT_ECO45</name>
<reference key="1">
    <citation type="journal article" date="2009" name="PLoS Genet.">
        <title>Organised genome dynamics in the Escherichia coli species results in highly diverse adaptive paths.</title>
        <authorList>
            <person name="Touchon M."/>
            <person name="Hoede C."/>
            <person name="Tenaillon O."/>
            <person name="Barbe V."/>
            <person name="Baeriswyl S."/>
            <person name="Bidet P."/>
            <person name="Bingen E."/>
            <person name="Bonacorsi S."/>
            <person name="Bouchier C."/>
            <person name="Bouvet O."/>
            <person name="Calteau A."/>
            <person name="Chiapello H."/>
            <person name="Clermont O."/>
            <person name="Cruveiller S."/>
            <person name="Danchin A."/>
            <person name="Diard M."/>
            <person name="Dossat C."/>
            <person name="Karoui M.E."/>
            <person name="Frapy E."/>
            <person name="Garry L."/>
            <person name="Ghigo J.M."/>
            <person name="Gilles A.M."/>
            <person name="Johnson J."/>
            <person name="Le Bouguenec C."/>
            <person name="Lescat M."/>
            <person name="Mangenot S."/>
            <person name="Martinez-Jehanne V."/>
            <person name="Matic I."/>
            <person name="Nassif X."/>
            <person name="Oztas S."/>
            <person name="Petit M.A."/>
            <person name="Pichon C."/>
            <person name="Rouy Z."/>
            <person name="Ruf C.S."/>
            <person name="Schneider D."/>
            <person name="Tourret J."/>
            <person name="Vacherie B."/>
            <person name="Vallenet D."/>
            <person name="Medigue C."/>
            <person name="Rocha E.P.C."/>
            <person name="Denamur E."/>
        </authorList>
    </citation>
    <scope>NUCLEOTIDE SEQUENCE [LARGE SCALE GENOMIC DNA]</scope>
    <source>
        <strain>S88 / ExPEC</strain>
    </source>
</reference>
<keyword id="KW-0010">Activator</keyword>
<keyword id="KW-0067">ATP-binding</keyword>
<keyword id="KW-0119">Carbohydrate metabolism</keyword>
<keyword id="KW-0238">DNA-binding</keyword>
<keyword id="KW-0547">Nucleotide-binding</keyword>
<keyword id="KW-1185">Reference proteome</keyword>
<keyword id="KW-0804">Transcription</keyword>
<keyword id="KW-0805">Transcription regulation</keyword>